<gene>
    <name type="primary">CRSP2</name>
</gene>
<dbReference type="EMBL" id="AB114133">
    <property type="protein sequence ID" value="BAC81765.1"/>
    <property type="molecule type" value="mRNA"/>
</dbReference>
<dbReference type="EMBL" id="AB164323">
    <property type="protein sequence ID" value="BAF36049.1"/>
    <property type="molecule type" value="Genomic_DNA"/>
</dbReference>
<dbReference type="RefSeq" id="NP_998912.1">
    <property type="nucleotide sequence ID" value="NM_213747.1"/>
</dbReference>
<dbReference type="RefSeq" id="XP_013849997.1">
    <property type="nucleotide sequence ID" value="XM_013994543.1"/>
</dbReference>
<dbReference type="SMR" id="Q766Y7"/>
<dbReference type="STRING" id="9823.ENSSSCP00000014228"/>
<dbReference type="PaxDb" id="9823-ENSSSCP00000014228"/>
<dbReference type="Ensembl" id="ENSSSCT00000014623.3">
    <property type="protein sequence ID" value="ENSSSCP00000014228.1"/>
    <property type="gene ID" value="ENSSSCG00000013387.3"/>
</dbReference>
<dbReference type="Ensembl" id="ENSSSCT00015098970.1">
    <property type="protein sequence ID" value="ENSSSCP00015040864.1"/>
    <property type="gene ID" value="ENSSSCG00015073577.1"/>
</dbReference>
<dbReference type="Ensembl" id="ENSSSCT00030048850.1">
    <property type="protein sequence ID" value="ENSSSCP00030022072.1"/>
    <property type="gene ID" value="ENSSSCG00030035250.1"/>
</dbReference>
<dbReference type="Ensembl" id="ENSSSCT00040098082.1">
    <property type="protein sequence ID" value="ENSSSCP00040043784.1"/>
    <property type="gene ID" value="ENSSSCG00040071369.1"/>
</dbReference>
<dbReference type="Ensembl" id="ENSSSCT00055055893.1">
    <property type="protein sequence ID" value="ENSSSCP00055044624.1"/>
    <property type="gene ID" value="ENSSSCG00055028206.1"/>
</dbReference>
<dbReference type="Ensembl" id="ENSSSCT00060010784.1">
    <property type="protein sequence ID" value="ENSSSCP00060003965.1"/>
    <property type="gene ID" value="ENSSSCG00060008432.1"/>
</dbReference>
<dbReference type="Ensembl" id="ENSSSCT00065031838.1">
    <property type="protein sequence ID" value="ENSSSCP00065013031.1"/>
    <property type="gene ID" value="ENSSSCG00065023918.1"/>
</dbReference>
<dbReference type="Ensembl" id="ENSSSCT00070018387.1">
    <property type="protein sequence ID" value="ENSSSCP00070015272.1"/>
    <property type="gene ID" value="ENSSSCG00070009493.1"/>
</dbReference>
<dbReference type="Ensembl" id="ENSSSCT00085036269">
    <property type="protein sequence ID" value="ENSSSCP00085024964"/>
    <property type="gene ID" value="ENSSSCG00085019118"/>
</dbReference>
<dbReference type="Ensembl" id="ENSSSCT00090046631">
    <property type="protein sequence ID" value="ENSSSCP00090028858"/>
    <property type="gene ID" value="ENSSSCG00090026416"/>
</dbReference>
<dbReference type="Ensembl" id="ENSSSCT00105046039">
    <property type="protein sequence ID" value="ENSSSCP00105032011"/>
    <property type="gene ID" value="ENSSSCG00105024378"/>
</dbReference>
<dbReference type="Ensembl" id="ENSSSCT00110040669">
    <property type="protein sequence ID" value="ENSSSCP00110028405"/>
    <property type="gene ID" value="ENSSSCG00110021056"/>
</dbReference>
<dbReference type="Ensembl" id="ENSSSCT00115005577">
    <property type="protein sequence ID" value="ENSSSCP00115005178"/>
    <property type="gene ID" value="ENSSSCG00115003323"/>
</dbReference>
<dbReference type="Ensembl" id="ENSSSCT00130056128">
    <property type="protein sequence ID" value="ENSSSCP00130040228"/>
    <property type="gene ID" value="ENSSSCG00130028733"/>
</dbReference>
<dbReference type="GeneID" id="396574"/>
<dbReference type="KEGG" id="ssc:396574"/>
<dbReference type="CTD" id="403414"/>
<dbReference type="eggNOG" id="ENOG502SQMP">
    <property type="taxonomic scope" value="Eukaryota"/>
</dbReference>
<dbReference type="GeneTree" id="ENSGT00940000156267"/>
<dbReference type="HOGENOM" id="CLU_122444_1_0_1"/>
<dbReference type="InParanoid" id="Q766Y7"/>
<dbReference type="OMA" id="VTNCLEG"/>
<dbReference type="OrthoDB" id="9929923at2759"/>
<dbReference type="TreeFam" id="TF333069"/>
<dbReference type="Proteomes" id="UP000008227">
    <property type="component" value="Chromosome 2"/>
</dbReference>
<dbReference type="Proteomes" id="UP000314985">
    <property type="component" value="Chromosome 2"/>
</dbReference>
<dbReference type="Proteomes" id="UP000694570">
    <property type="component" value="Unplaced"/>
</dbReference>
<dbReference type="Proteomes" id="UP000694571">
    <property type="component" value="Unplaced"/>
</dbReference>
<dbReference type="Proteomes" id="UP000694720">
    <property type="component" value="Unplaced"/>
</dbReference>
<dbReference type="Proteomes" id="UP000694722">
    <property type="component" value="Unplaced"/>
</dbReference>
<dbReference type="Proteomes" id="UP000694723">
    <property type="component" value="Unplaced"/>
</dbReference>
<dbReference type="Proteomes" id="UP000694724">
    <property type="component" value="Unplaced"/>
</dbReference>
<dbReference type="Proteomes" id="UP000694725">
    <property type="component" value="Unplaced"/>
</dbReference>
<dbReference type="Proteomes" id="UP000694726">
    <property type="component" value="Unplaced"/>
</dbReference>
<dbReference type="Proteomes" id="UP000694727">
    <property type="component" value="Unplaced"/>
</dbReference>
<dbReference type="Proteomes" id="UP000694728">
    <property type="component" value="Unplaced"/>
</dbReference>
<dbReference type="Bgee" id="ENSSSCG00000013387">
    <property type="expression patterns" value="Expressed in amygdala and 20 other cell types or tissues"/>
</dbReference>
<dbReference type="ExpressionAtlas" id="Q766Y7">
    <property type="expression patterns" value="baseline and differential"/>
</dbReference>
<dbReference type="GO" id="GO:0005615">
    <property type="term" value="C:extracellular space"/>
    <property type="evidence" value="ECO:0000318"/>
    <property type="project" value="GO_Central"/>
</dbReference>
<dbReference type="GO" id="GO:0031716">
    <property type="term" value="F:calcitonin receptor binding"/>
    <property type="evidence" value="ECO:0000318"/>
    <property type="project" value="GO_Central"/>
</dbReference>
<dbReference type="GO" id="GO:0005179">
    <property type="term" value="F:hormone activity"/>
    <property type="evidence" value="ECO:0007669"/>
    <property type="project" value="InterPro"/>
</dbReference>
<dbReference type="GO" id="GO:0007189">
    <property type="term" value="P:adenylate cyclase-activating G protein-coupled receptor signaling pathway"/>
    <property type="evidence" value="ECO:0000318"/>
    <property type="project" value="GO_Central"/>
</dbReference>
<dbReference type="GO" id="GO:0051480">
    <property type="term" value="P:regulation of cytosolic calcium ion concentration"/>
    <property type="evidence" value="ECO:0000318"/>
    <property type="project" value="GO_Central"/>
</dbReference>
<dbReference type="Gene3D" id="6.10.250.2190">
    <property type="match status" value="1"/>
</dbReference>
<dbReference type="InterPro" id="IPR021117">
    <property type="entry name" value="Calcitonin-like"/>
</dbReference>
<dbReference type="InterPro" id="IPR021116">
    <property type="entry name" value="Calcitonin/adrenomedullin"/>
</dbReference>
<dbReference type="InterPro" id="IPR015476">
    <property type="entry name" value="Calcitonin_gene-rel_peptide"/>
</dbReference>
<dbReference type="PANTHER" id="PTHR10505:SF3">
    <property type="entry name" value="CALCITONIN GENE-RELATED PEPTIDE 2"/>
    <property type="match status" value="1"/>
</dbReference>
<dbReference type="PANTHER" id="PTHR10505">
    <property type="entry name" value="CALCITONIN-RELATED"/>
    <property type="match status" value="1"/>
</dbReference>
<dbReference type="Pfam" id="PF00214">
    <property type="entry name" value="Calc_CGRP_IAPP"/>
    <property type="match status" value="1"/>
</dbReference>
<dbReference type="PRINTS" id="PR00817">
    <property type="entry name" value="CALCITONINB"/>
</dbReference>
<evidence type="ECO:0000250" key="1"/>
<evidence type="ECO:0000255" key="2"/>
<evidence type="ECO:0000269" key="3">
    <source>
    </source>
</evidence>
<evidence type="ECO:0000269" key="4">
    <source>
    </source>
</evidence>
<evidence type="ECO:0000305" key="5"/>
<reference key="1">
    <citation type="journal article" date="2003" name="Biochem. Biophys. Res. Commun.">
        <title>Identification of second and third calcitonin receptor-stimulating peptides in porcine brain.</title>
        <authorList>
            <person name="Katafuchi T."/>
            <person name="Hamano K."/>
            <person name="Kikumoto K."/>
            <person name="Minamino N."/>
        </authorList>
    </citation>
    <scope>NUCLEOTIDE SEQUENCE [MRNA]</scope>
    <scope>TISSUE SPECIFICITY</scope>
    <source>
        <tissue>Hypothalamus</tissue>
    </source>
</reference>
<reference key="2">
    <citation type="journal article" date="2008" name="Cytogenet. Genome Res.">
        <title>Genomic organization, expression and evolution of porcine CRSP1, 2, and 3.</title>
        <authorList>
            <person name="Rezaeian A.H."/>
            <person name="Katafuchi T."/>
            <person name="Yoshizawa M."/>
            <person name="Hiraiwa N."/>
            <person name="Saito T."/>
            <person name="Nishibori M."/>
            <person name="Hamano K."/>
            <person name="Minamino N."/>
            <person name="Yasue H."/>
        </authorList>
    </citation>
    <scope>NUCLEOTIDE SEQUENCE [GENOMIC DNA]</scope>
    <scope>TISSUE SPECIFICITY</scope>
</reference>
<comment type="subcellular location">
    <subcellularLocation>
        <location evidence="1">Secreted</location>
    </subcellularLocation>
</comment>
<comment type="tissue specificity">
    <text evidence="3 4">Mainly expressed in the thyroid gland and CNS. Found in the nerve cells of the cerebrum, hippocampus, hypothalamus, pons/midbrain and thalamus. Also detected in the glia-like cells of pons/midbrain and in meninx of tactus opticus.</text>
</comment>
<comment type="similarity">
    <text evidence="5">Belongs to the calcitonin family.</text>
</comment>
<keyword id="KW-1015">Disulfide bond</keyword>
<keyword id="KW-0675">Receptor</keyword>
<keyword id="KW-1185">Reference proteome</keyword>
<keyword id="KW-0964">Secreted</keyword>
<keyword id="KW-0732">Signal</keyword>
<organism>
    <name type="scientific">Sus scrofa</name>
    <name type="common">Pig</name>
    <dbReference type="NCBI Taxonomy" id="9823"/>
    <lineage>
        <taxon>Eukaryota</taxon>
        <taxon>Metazoa</taxon>
        <taxon>Chordata</taxon>
        <taxon>Craniata</taxon>
        <taxon>Vertebrata</taxon>
        <taxon>Euteleostomi</taxon>
        <taxon>Mammalia</taxon>
        <taxon>Eutheria</taxon>
        <taxon>Laurasiatheria</taxon>
        <taxon>Artiodactyla</taxon>
        <taxon>Suina</taxon>
        <taxon>Suidae</taxon>
        <taxon>Sus</taxon>
    </lineage>
</organism>
<feature type="signal peptide" evidence="2">
    <location>
        <begin position="1"/>
        <end position="25"/>
    </location>
</feature>
<feature type="propeptide" id="PRO_0000353085" evidence="1">
    <location>
        <begin position="26"/>
        <end position="79"/>
    </location>
</feature>
<feature type="peptide" id="PRO_0000353086" description="Calcitonin receptor-stimulating peptide 2">
    <location>
        <begin position="80"/>
        <end position="117"/>
    </location>
</feature>
<feature type="disulfide bond" evidence="1">
    <location>
        <begin position="81"/>
        <end position="86"/>
    </location>
</feature>
<sequence>MGFWKFPPFLVLSILVLYQAGMFHTAPVRLPLESSFDSATLTEEEVSLLLVAMVKDYVQMKATVLEQESEDFSITAQEKSCNTASCVTHKMTGWLSRSGSVAKNNFMPTNVDSKILG</sequence>
<proteinExistence type="evidence at transcript level"/>
<name>CRSP2_PIG</name>
<accession>Q766Y7</accession>
<protein>
    <recommendedName>
        <fullName>Calcitonin receptor-stimulating peptide 2</fullName>
        <shortName>CRSP-2</shortName>
    </recommendedName>
</protein>